<organism>
    <name type="scientific">Rhodopseudomonas palustris (strain TIE-1)</name>
    <dbReference type="NCBI Taxonomy" id="395960"/>
    <lineage>
        <taxon>Bacteria</taxon>
        <taxon>Pseudomonadati</taxon>
        <taxon>Pseudomonadota</taxon>
        <taxon>Alphaproteobacteria</taxon>
        <taxon>Hyphomicrobiales</taxon>
        <taxon>Nitrobacteraceae</taxon>
        <taxon>Rhodopseudomonas</taxon>
    </lineage>
</organism>
<proteinExistence type="inferred from homology"/>
<keyword id="KW-0030">Aminoacyl-tRNA synthetase</keyword>
<keyword id="KW-0067">ATP-binding</keyword>
<keyword id="KW-0963">Cytoplasm</keyword>
<keyword id="KW-0436">Ligase</keyword>
<keyword id="KW-0547">Nucleotide-binding</keyword>
<keyword id="KW-0648">Protein biosynthesis</keyword>
<name>SYP_RHOPT</name>
<gene>
    <name evidence="1" type="primary">proS</name>
    <name type="ordered locus">Rpal_3276</name>
</gene>
<accession>B3Q7L2</accession>
<protein>
    <recommendedName>
        <fullName evidence="1">Proline--tRNA ligase</fullName>
        <ecNumber evidence="1">6.1.1.15</ecNumber>
    </recommendedName>
    <alternativeName>
        <fullName evidence="1">Prolyl-tRNA synthetase</fullName>
        <shortName evidence="1">ProRS</shortName>
    </alternativeName>
</protein>
<feature type="chain" id="PRO_1000199458" description="Proline--tRNA ligase">
    <location>
        <begin position="1"/>
        <end position="438"/>
    </location>
</feature>
<dbReference type="EC" id="6.1.1.15" evidence="1"/>
<dbReference type="EMBL" id="CP001096">
    <property type="protein sequence ID" value="ACF01778.1"/>
    <property type="molecule type" value="Genomic_DNA"/>
</dbReference>
<dbReference type="RefSeq" id="WP_012496365.1">
    <property type="nucleotide sequence ID" value="NC_011004.1"/>
</dbReference>
<dbReference type="SMR" id="B3Q7L2"/>
<dbReference type="KEGG" id="rpt:Rpal_3276"/>
<dbReference type="HOGENOM" id="CLU_016739_4_2_5"/>
<dbReference type="OrthoDB" id="9809052at2"/>
<dbReference type="Proteomes" id="UP000001725">
    <property type="component" value="Chromosome"/>
</dbReference>
<dbReference type="GO" id="GO:0005829">
    <property type="term" value="C:cytosol"/>
    <property type="evidence" value="ECO:0007669"/>
    <property type="project" value="TreeGrafter"/>
</dbReference>
<dbReference type="GO" id="GO:0005524">
    <property type="term" value="F:ATP binding"/>
    <property type="evidence" value="ECO:0007669"/>
    <property type="project" value="UniProtKB-UniRule"/>
</dbReference>
<dbReference type="GO" id="GO:0004827">
    <property type="term" value="F:proline-tRNA ligase activity"/>
    <property type="evidence" value="ECO:0007669"/>
    <property type="project" value="UniProtKB-UniRule"/>
</dbReference>
<dbReference type="GO" id="GO:0006433">
    <property type="term" value="P:prolyl-tRNA aminoacylation"/>
    <property type="evidence" value="ECO:0007669"/>
    <property type="project" value="UniProtKB-UniRule"/>
</dbReference>
<dbReference type="CDD" id="cd00861">
    <property type="entry name" value="ProRS_anticodon_short"/>
    <property type="match status" value="1"/>
</dbReference>
<dbReference type="CDD" id="cd00779">
    <property type="entry name" value="ProRS_core_prok"/>
    <property type="match status" value="1"/>
</dbReference>
<dbReference type="FunFam" id="3.30.930.10:FF:000042">
    <property type="entry name" value="probable proline--tRNA ligase, mitochondrial"/>
    <property type="match status" value="1"/>
</dbReference>
<dbReference type="FunFam" id="3.40.50.800:FF:000032">
    <property type="entry name" value="Proline--tRNA ligase"/>
    <property type="match status" value="1"/>
</dbReference>
<dbReference type="Gene3D" id="3.40.50.800">
    <property type="entry name" value="Anticodon-binding domain"/>
    <property type="match status" value="1"/>
</dbReference>
<dbReference type="Gene3D" id="3.30.930.10">
    <property type="entry name" value="Bira Bifunctional Protein, Domain 2"/>
    <property type="match status" value="1"/>
</dbReference>
<dbReference type="HAMAP" id="MF_01570">
    <property type="entry name" value="Pro_tRNA_synth_type2"/>
    <property type="match status" value="1"/>
</dbReference>
<dbReference type="InterPro" id="IPR002314">
    <property type="entry name" value="aa-tRNA-synt_IIb"/>
</dbReference>
<dbReference type="InterPro" id="IPR006195">
    <property type="entry name" value="aa-tRNA-synth_II"/>
</dbReference>
<dbReference type="InterPro" id="IPR045864">
    <property type="entry name" value="aa-tRNA-synth_II/BPL/LPL"/>
</dbReference>
<dbReference type="InterPro" id="IPR004154">
    <property type="entry name" value="Anticodon-bd"/>
</dbReference>
<dbReference type="InterPro" id="IPR036621">
    <property type="entry name" value="Anticodon-bd_dom_sf"/>
</dbReference>
<dbReference type="InterPro" id="IPR002316">
    <property type="entry name" value="Pro-tRNA-ligase_IIa"/>
</dbReference>
<dbReference type="InterPro" id="IPR004500">
    <property type="entry name" value="Pro-tRNA-synth_IIa_bac-type"/>
</dbReference>
<dbReference type="InterPro" id="IPR050062">
    <property type="entry name" value="Pro-tRNA_synthetase"/>
</dbReference>
<dbReference type="InterPro" id="IPR023716">
    <property type="entry name" value="Prolyl-tRNA_ligase_IIa_type2"/>
</dbReference>
<dbReference type="InterPro" id="IPR044140">
    <property type="entry name" value="ProRS_anticodon_short"/>
</dbReference>
<dbReference type="InterPro" id="IPR033730">
    <property type="entry name" value="ProRS_core_prok"/>
</dbReference>
<dbReference type="NCBIfam" id="NF008979">
    <property type="entry name" value="PRK12325.1"/>
    <property type="match status" value="1"/>
</dbReference>
<dbReference type="NCBIfam" id="TIGR00409">
    <property type="entry name" value="proS_fam_II"/>
    <property type="match status" value="1"/>
</dbReference>
<dbReference type="PANTHER" id="PTHR42753">
    <property type="entry name" value="MITOCHONDRIAL RIBOSOME PROTEIN L39/PROLYL-TRNA LIGASE FAMILY MEMBER"/>
    <property type="match status" value="1"/>
</dbReference>
<dbReference type="PANTHER" id="PTHR42753:SF2">
    <property type="entry name" value="PROLINE--TRNA LIGASE"/>
    <property type="match status" value="1"/>
</dbReference>
<dbReference type="Pfam" id="PF03129">
    <property type="entry name" value="HGTP_anticodon"/>
    <property type="match status" value="1"/>
</dbReference>
<dbReference type="Pfam" id="PF00587">
    <property type="entry name" value="tRNA-synt_2b"/>
    <property type="match status" value="1"/>
</dbReference>
<dbReference type="PRINTS" id="PR01046">
    <property type="entry name" value="TRNASYNTHPRO"/>
</dbReference>
<dbReference type="SUPFAM" id="SSF52954">
    <property type="entry name" value="Class II aaRS ABD-related"/>
    <property type="match status" value="1"/>
</dbReference>
<dbReference type="SUPFAM" id="SSF55681">
    <property type="entry name" value="Class II aaRS and biotin synthetases"/>
    <property type="match status" value="1"/>
</dbReference>
<dbReference type="PROSITE" id="PS50862">
    <property type="entry name" value="AA_TRNA_LIGASE_II"/>
    <property type="match status" value="1"/>
</dbReference>
<evidence type="ECO:0000255" key="1">
    <source>
        <dbReference type="HAMAP-Rule" id="MF_01570"/>
    </source>
</evidence>
<comment type="function">
    <text evidence="1">Catalyzes the attachment of proline to tRNA(Pro) in a two-step reaction: proline is first activated by ATP to form Pro-AMP and then transferred to the acceptor end of tRNA(Pro).</text>
</comment>
<comment type="catalytic activity">
    <reaction evidence="1">
        <text>tRNA(Pro) + L-proline + ATP = L-prolyl-tRNA(Pro) + AMP + diphosphate</text>
        <dbReference type="Rhea" id="RHEA:14305"/>
        <dbReference type="Rhea" id="RHEA-COMP:9700"/>
        <dbReference type="Rhea" id="RHEA-COMP:9702"/>
        <dbReference type="ChEBI" id="CHEBI:30616"/>
        <dbReference type="ChEBI" id="CHEBI:33019"/>
        <dbReference type="ChEBI" id="CHEBI:60039"/>
        <dbReference type="ChEBI" id="CHEBI:78442"/>
        <dbReference type="ChEBI" id="CHEBI:78532"/>
        <dbReference type="ChEBI" id="CHEBI:456215"/>
        <dbReference type="EC" id="6.1.1.15"/>
    </reaction>
</comment>
<comment type="subunit">
    <text evidence="1">Homodimer.</text>
</comment>
<comment type="subcellular location">
    <subcellularLocation>
        <location evidence="1">Cytoplasm</location>
    </subcellularLocation>
</comment>
<comment type="similarity">
    <text evidence="1">Belongs to the class-II aminoacyl-tRNA synthetase family. ProS type 2 subfamily.</text>
</comment>
<reference key="1">
    <citation type="submission" date="2008-05" db="EMBL/GenBank/DDBJ databases">
        <title>Complete sequence of Rhodopseudomonas palustris TIE-1.</title>
        <authorList>
            <consortium name="US DOE Joint Genome Institute"/>
            <person name="Lucas S."/>
            <person name="Copeland A."/>
            <person name="Lapidus A."/>
            <person name="Glavina del Rio T."/>
            <person name="Dalin E."/>
            <person name="Tice H."/>
            <person name="Pitluck S."/>
            <person name="Chain P."/>
            <person name="Malfatti S."/>
            <person name="Shin M."/>
            <person name="Vergez L."/>
            <person name="Lang D."/>
            <person name="Schmutz J."/>
            <person name="Larimer F."/>
            <person name="Land M."/>
            <person name="Hauser L."/>
            <person name="Kyrpides N."/>
            <person name="Mikhailova N."/>
            <person name="Emerson D."/>
            <person name="Newman D.K."/>
            <person name="Roden E."/>
            <person name="Richardson P."/>
        </authorList>
    </citation>
    <scope>NUCLEOTIDE SEQUENCE [LARGE SCALE GENOMIC DNA]</scope>
    <source>
        <strain>TIE-1</strain>
    </source>
</reference>
<sequence>MRLSRFFLPILKENPKEAEIVSHRLMLRAGMLRQEAAGIYAWLPLGHRVLKKIEQIVREEQNRAGAIELLMPTLQLADLWRESGRYDAYGPEMLRIADRHKRELLYGPTNEEMITEIFRAYIKSYKSLPLNLYHIQWKFRDEQRPRFGVMRGREFLMKDAYSFDVDEAGARKSYNKMFVAYLRTFARMGLKAIPMRAETGPIGGDLSHEFIVLAETGESGVYIDRDVLNLPVPDENVDYDGDLTPIIKQWTSVYAATEDVHEPARYESEVPEANRLNTRGIEVGQIFYFGTKYSDSMKANVTGPDGTDAPIHGGSYGVGVSRLLGAIIEACHDDNGIIWPEAVAPFRVTILNLKQGDAATDAACDQLYRELSAKGVDVLYDDTDQRAGAKFATADLIGIPWQIHVGPRGLAEGKVELKRRSDGSRENLALADVVARLT</sequence>